<evidence type="ECO:0000255" key="1">
    <source>
        <dbReference type="HAMAP-Rule" id="MF_00123"/>
    </source>
</evidence>
<keyword id="KW-0030">Aminoacyl-tRNA synthetase</keyword>
<keyword id="KW-0067">ATP-binding</keyword>
<keyword id="KW-0963">Cytoplasm</keyword>
<keyword id="KW-0436">Ligase</keyword>
<keyword id="KW-0547">Nucleotide-binding</keyword>
<keyword id="KW-0648">Protein biosynthesis</keyword>
<keyword id="KW-1185">Reference proteome</keyword>
<organism>
    <name type="scientific">Shewanella denitrificans (strain OS217 / ATCC BAA-1090 / DSM 15013)</name>
    <dbReference type="NCBI Taxonomy" id="318161"/>
    <lineage>
        <taxon>Bacteria</taxon>
        <taxon>Pseudomonadati</taxon>
        <taxon>Pseudomonadota</taxon>
        <taxon>Gammaproteobacteria</taxon>
        <taxon>Alteromonadales</taxon>
        <taxon>Shewanellaceae</taxon>
        <taxon>Shewanella</taxon>
    </lineage>
</organism>
<proteinExistence type="inferred from homology"/>
<reference key="1">
    <citation type="submission" date="2006-03" db="EMBL/GenBank/DDBJ databases">
        <title>Complete sequence of Shewanella denitrificans OS217.</title>
        <authorList>
            <consortium name="US DOE Joint Genome Institute"/>
            <person name="Copeland A."/>
            <person name="Lucas S."/>
            <person name="Lapidus A."/>
            <person name="Barry K."/>
            <person name="Detter J.C."/>
            <person name="Glavina del Rio T."/>
            <person name="Hammon N."/>
            <person name="Israni S."/>
            <person name="Dalin E."/>
            <person name="Tice H."/>
            <person name="Pitluck S."/>
            <person name="Brettin T."/>
            <person name="Bruce D."/>
            <person name="Han C."/>
            <person name="Tapia R."/>
            <person name="Gilna P."/>
            <person name="Kiss H."/>
            <person name="Schmutz J."/>
            <person name="Larimer F."/>
            <person name="Land M."/>
            <person name="Hauser L."/>
            <person name="Kyrpides N."/>
            <person name="Lykidis A."/>
            <person name="Richardson P."/>
        </authorList>
    </citation>
    <scope>NUCLEOTIDE SEQUENCE [LARGE SCALE GENOMIC DNA]</scope>
    <source>
        <strain>OS217 / ATCC BAA-1090 / DSM 15013</strain>
    </source>
</reference>
<accession>Q12IU3</accession>
<protein>
    <recommendedName>
        <fullName evidence="1">Arginine--tRNA ligase</fullName>
        <ecNumber evidence="1">6.1.1.19</ecNumber>
    </recommendedName>
    <alternativeName>
        <fullName evidence="1">Arginyl-tRNA synthetase</fullName>
        <shortName evidence="1">ArgRS</shortName>
    </alternativeName>
</protein>
<comment type="catalytic activity">
    <reaction evidence="1">
        <text>tRNA(Arg) + L-arginine + ATP = L-arginyl-tRNA(Arg) + AMP + diphosphate</text>
        <dbReference type="Rhea" id="RHEA:20301"/>
        <dbReference type="Rhea" id="RHEA-COMP:9658"/>
        <dbReference type="Rhea" id="RHEA-COMP:9673"/>
        <dbReference type="ChEBI" id="CHEBI:30616"/>
        <dbReference type="ChEBI" id="CHEBI:32682"/>
        <dbReference type="ChEBI" id="CHEBI:33019"/>
        <dbReference type="ChEBI" id="CHEBI:78442"/>
        <dbReference type="ChEBI" id="CHEBI:78513"/>
        <dbReference type="ChEBI" id="CHEBI:456215"/>
        <dbReference type="EC" id="6.1.1.19"/>
    </reaction>
</comment>
<comment type="subunit">
    <text evidence="1">Monomer.</text>
</comment>
<comment type="subcellular location">
    <subcellularLocation>
        <location evidence="1">Cytoplasm</location>
    </subcellularLocation>
</comment>
<comment type="similarity">
    <text evidence="1">Belongs to the class-I aminoacyl-tRNA synthetase family.</text>
</comment>
<name>SYR_SHEDO</name>
<dbReference type="EC" id="6.1.1.19" evidence="1"/>
<dbReference type="EMBL" id="CP000302">
    <property type="protein sequence ID" value="ABE56633.1"/>
    <property type="molecule type" value="Genomic_DNA"/>
</dbReference>
<dbReference type="RefSeq" id="WP_011497776.1">
    <property type="nucleotide sequence ID" value="NC_007954.1"/>
</dbReference>
<dbReference type="SMR" id="Q12IU3"/>
<dbReference type="STRING" id="318161.Sden_3357"/>
<dbReference type="KEGG" id="sdn:Sden_3357"/>
<dbReference type="eggNOG" id="COG0018">
    <property type="taxonomic scope" value="Bacteria"/>
</dbReference>
<dbReference type="HOGENOM" id="CLU_006406_5_1_6"/>
<dbReference type="OrthoDB" id="9803211at2"/>
<dbReference type="Proteomes" id="UP000001982">
    <property type="component" value="Chromosome"/>
</dbReference>
<dbReference type="GO" id="GO:0005737">
    <property type="term" value="C:cytoplasm"/>
    <property type="evidence" value="ECO:0007669"/>
    <property type="project" value="UniProtKB-SubCell"/>
</dbReference>
<dbReference type="GO" id="GO:0004814">
    <property type="term" value="F:arginine-tRNA ligase activity"/>
    <property type="evidence" value="ECO:0007669"/>
    <property type="project" value="UniProtKB-UniRule"/>
</dbReference>
<dbReference type="GO" id="GO:0005524">
    <property type="term" value="F:ATP binding"/>
    <property type="evidence" value="ECO:0007669"/>
    <property type="project" value="UniProtKB-UniRule"/>
</dbReference>
<dbReference type="GO" id="GO:0006420">
    <property type="term" value="P:arginyl-tRNA aminoacylation"/>
    <property type="evidence" value="ECO:0007669"/>
    <property type="project" value="UniProtKB-UniRule"/>
</dbReference>
<dbReference type="CDD" id="cd07956">
    <property type="entry name" value="Anticodon_Ia_Arg"/>
    <property type="match status" value="1"/>
</dbReference>
<dbReference type="CDD" id="cd00671">
    <property type="entry name" value="ArgRS_core"/>
    <property type="match status" value="1"/>
</dbReference>
<dbReference type="FunFam" id="3.30.1360.70:FF:000003">
    <property type="entry name" value="Arginine--tRNA ligase"/>
    <property type="match status" value="1"/>
</dbReference>
<dbReference type="FunFam" id="3.40.50.620:FF:000030">
    <property type="entry name" value="Arginine--tRNA ligase"/>
    <property type="match status" value="1"/>
</dbReference>
<dbReference type="FunFam" id="1.10.730.10:FF:000006">
    <property type="entry name" value="Arginyl-tRNA synthetase 2, mitochondrial"/>
    <property type="match status" value="1"/>
</dbReference>
<dbReference type="Gene3D" id="3.30.1360.70">
    <property type="entry name" value="Arginyl tRNA synthetase N-terminal domain"/>
    <property type="match status" value="1"/>
</dbReference>
<dbReference type="Gene3D" id="3.40.50.620">
    <property type="entry name" value="HUPs"/>
    <property type="match status" value="1"/>
</dbReference>
<dbReference type="Gene3D" id="1.10.730.10">
    <property type="entry name" value="Isoleucyl-tRNA Synthetase, Domain 1"/>
    <property type="match status" value="1"/>
</dbReference>
<dbReference type="HAMAP" id="MF_00123">
    <property type="entry name" value="Arg_tRNA_synth"/>
    <property type="match status" value="1"/>
</dbReference>
<dbReference type="InterPro" id="IPR001412">
    <property type="entry name" value="aa-tRNA-synth_I_CS"/>
</dbReference>
<dbReference type="InterPro" id="IPR001278">
    <property type="entry name" value="Arg-tRNA-ligase"/>
</dbReference>
<dbReference type="InterPro" id="IPR005148">
    <property type="entry name" value="Arg-tRNA-synth_N"/>
</dbReference>
<dbReference type="InterPro" id="IPR036695">
    <property type="entry name" value="Arg-tRNA-synth_N_sf"/>
</dbReference>
<dbReference type="InterPro" id="IPR035684">
    <property type="entry name" value="ArgRS_core"/>
</dbReference>
<dbReference type="InterPro" id="IPR008909">
    <property type="entry name" value="DALR_anticod-bd"/>
</dbReference>
<dbReference type="InterPro" id="IPR014729">
    <property type="entry name" value="Rossmann-like_a/b/a_fold"/>
</dbReference>
<dbReference type="InterPro" id="IPR009080">
    <property type="entry name" value="tRNAsynth_Ia_anticodon-bd"/>
</dbReference>
<dbReference type="NCBIfam" id="TIGR00456">
    <property type="entry name" value="argS"/>
    <property type="match status" value="1"/>
</dbReference>
<dbReference type="PANTHER" id="PTHR11956:SF5">
    <property type="entry name" value="ARGININE--TRNA LIGASE, CYTOPLASMIC"/>
    <property type="match status" value="1"/>
</dbReference>
<dbReference type="PANTHER" id="PTHR11956">
    <property type="entry name" value="ARGINYL-TRNA SYNTHETASE"/>
    <property type="match status" value="1"/>
</dbReference>
<dbReference type="Pfam" id="PF03485">
    <property type="entry name" value="Arg_tRNA_synt_N"/>
    <property type="match status" value="1"/>
</dbReference>
<dbReference type="Pfam" id="PF05746">
    <property type="entry name" value="DALR_1"/>
    <property type="match status" value="1"/>
</dbReference>
<dbReference type="Pfam" id="PF00750">
    <property type="entry name" value="tRNA-synt_1d"/>
    <property type="match status" value="1"/>
</dbReference>
<dbReference type="PRINTS" id="PR01038">
    <property type="entry name" value="TRNASYNTHARG"/>
</dbReference>
<dbReference type="SMART" id="SM01016">
    <property type="entry name" value="Arg_tRNA_synt_N"/>
    <property type="match status" value="1"/>
</dbReference>
<dbReference type="SMART" id="SM00836">
    <property type="entry name" value="DALR_1"/>
    <property type="match status" value="1"/>
</dbReference>
<dbReference type="SUPFAM" id="SSF47323">
    <property type="entry name" value="Anticodon-binding domain of a subclass of class I aminoacyl-tRNA synthetases"/>
    <property type="match status" value="1"/>
</dbReference>
<dbReference type="SUPFAM" id="SSF55190">
    <property type="entry name" value="Arginyl-tRNA synthetase (ArgRS), N-terminal 'additional' domain"/>
    <property type="match status" value="1"/>
</dbReference>
<dbReference type="SUPFAM" id="SSF52374">
    <property type="entry name" value="Nucleotidylyl transferase"/>
    <property type="match status" value="1"/>
</dbReference>
<dbReference type="PROSITE" id="PS00178">
    <property type="entry name" value="AA_TRNA_LIGASE_I"/>
    <property type="match status" value="1"/>
</dbReference>
<feature type="chain" id="PRO_1000018114" description="Arginine--tRNA ligase">
    <location>
        <begin position="1"/>
        <end position="581"/>
    </location>
</feature>
<feature type="short sequence motif" description="'HIGH' region">
    <location>
        <begin position="126"/>
        <end position="136"/>
    </location>
</feature>
<sequence>MKSHIESLLEQTIESFKNQGIVPADFQARIQVDRTKDKTHGDLATNLAMMLTKVAGKNPRELAQLIIDNLPPSSHVAKVEIAGPGFINFFIDDNALATQLEQALNDEHFGITLPEPQTIVVDYSSPNLAKEMHVGHLRSTIIGDSVVRALEFLGHKVIRQNHVGDWGTQFGMLLAYMEELRAANGEQAQLELSDLETFYRAAKLRFDESTDFATRARQLVVALQSGDEYCNKLWQEFNDISLSHCHDVYERLGVSLTRADVHGESAYNADLEQVVKDLDAKGLLSESNGAKVVFQEAFRTKEGEPLPVIIQKADGGYLYATSDLAAMRYRSKVLKADRALYFVDLRQALHFQQVFSLAKLAKFVRKDMQLEHNGFGTMNGEDGRPFKTRSGGVVKLVDLLDEANNRALELVRSKNPDMDEATLTEIARVVGISSVKYADLSKNRTSDYIFSFEQMLSFEGNTAPYLLYAYTRVAGIFKRAEDIDLTDAKIVLEHDKEKELATKLAQFGETLYKMTDKAQPNMLCNYLYELAGAFSSFYEACPVLAADTPAQQGSRLLLAKLTANTLNKGLSLLGIETLERM</sequence>
<gene>
    <name evidence="1" type="primary">argS</name>
    <name type="ordered locus">Sden_3357</name>
</gene>